<comment type="function">
    <text evidence="2 3 4 5 6 9">Part of the gene cluster that mediates the biosynthesis of pneumocandins, lipohexapeptides of the echinocandin family that prevent fungal cell wall formation by non-competitive inhibition of beta-1,3-glucan synthase (PubMed:27705900). The 10,12-dimethylmyristoyl side chain is synthesized by the reducing polyketide synthase gloL/GLPKS4 (PubMed:27494047). The thioesterase gloN/GLHYD exclusively interacts with gloL/GLPKS4 to maintain turnover of the polyketide side chain (PubMed:27494047). The 10R,12S-dimethylmyristic acid is then transferred to the first thiolation domain of the nonribosomal peptide synthetase gloA/GLNRPS4 by the acyl-AMP ligase gloD/GLligase, followed by its acylation to L-ornithine to trigger elongation of the cyclic hexapeptide (PubMed:27494047). L-ornithine, 4R-hydroxyl-L-proline (generated from L-proline by the dioxygenase gloF/GLOXY2), 3S-hydroxyl-L-homotyrosine (generated by gloG/GLHtyB, gloH/GLHtyA, gloI/GLHtyC, gloJ/GLHtyD and hydroxylated at C-3 by the dioxygenase gloM/GLOXY1), 3R-hydroxyl-L-glutamine (generated from L-glutamine probably by the dioxygenase gloE/GLOXY3) and 3S-hydroxyl-L-proline (generated from L-proline by the dioxygenase gloF/GLOXY2 to yield pneumocandin B0), or 3S-hydroxyl-4S-methyl-L-proline (generated from L-leucine by the dioxygenase gloC/GLOXY4 to yield pneumocandin A0) are sequentially added to the growing chain (PubMed:25270390, PubMed:25527531, PubMed:25879325). The last C domain of gloA/GLNRPS4 is proposed to be responsible for cyclization by condensation to form the peptide bond between L-ornithine and 3S-hydroxyl-4S-methyl-L-proline (for pneumocandin A0) or 3S-hydroxyl-L-proline (for pneumocandin B0). Finally, the subsequent C-4 hydroxylation of 3S-hydroxyl-L-homotyrosine and L-ornithine dihydroxylation at C-4 and C-5 are performed by the cytochrome P450 monooxygenases gloP/GLP450-1 and gloO/GLP450-2, respectively (PubMed:25879325).</text>
</comment>
<comment type="biotechnology">
    <text evidence="3 4 5">Pneumocandin B0 is the starting molecule for the first semisynthetic echinocandin antifungal drug, caspofungin acetate (PubMed:25527531). Pneumocandin B0 is a minor fermentation product, and its industrial production was achieved by a combination of extensive mutation and medium optimization (PubMed:25527531). Inactivation of three of gloP/GLP450-1, gloO/GLP450-2, and gloM/GLOXY1 generates 13 different pneumocandin analogs that lack one, two, three, or four hydroxyl groups on 4R,5R-dihydroxy-ornithine and 3S,4S-dihydroxy-homotyrosine of the parent hexapeptide (PubMed:25879325). All of these cyclic lipopeptides show potent antifungal activities, and two new metabolites pneumocandins F and G are more potent in vitro against Candida species and Aspergillus fumigatus than the principal fermentation products, pneumocandins A0 and B0 (PubMed:25879325). Moreover, feeding alternative side chain precursors yields acrophiarin and 4 additional pneumocandin congeners with straight C14, C15, and C16 side chains. One of those compounds, pneumocandin I, has elevated antifungal activity and similar hemolytic activity compared to pneumocandin B0, the starting molecule for caspofungin, demonstrating the potential for using gloD/GLligase for future engineering of new echinocandin analogs (PubMed:27494047).</text>
</comment>
<proteinExistence type="evidence at protein level"/>
<gene>
    <name evidence="7" type="primary">gloB</name>
    <name evidence="8" type="synonym">GLHYP</name>
    <name type="ORF">GLAREA_10045</name>
</gene>
<accession>S3DQQ3</accession>
<name>GLOB_GLAL2</name>
<feature type="chain" id="PRO_0000444487" description="Pneumocandin biosynthesis cluster protein B">
    <location>
        <begin position="1"/>
        <end position="682"/>
    </location>
</feature>
<feature type="region of interest" description="Disordered" evidence="1">
    <location>
        <begin position="63"/>
        <end position="86"/>
    </location>
</feature>
<feature type="region of interest" description="Disordered" evidence="1">
    <location>
        <begin position="107"/>
        <end position="129"/>
    </location>
</feature>
<feature type="region of interest" description="Disordered" evidence="1">
    <location>
        <begin position="251"/>
        <end position="358"/>
    </location>
</feature>
<feature type="compositionally biased region" description="Low complexity" evidence="1">
    <location>
        <begin position="63"/>
        <end position="73"/>
    </location>
</feature>
<feature type="compositionally biased region" description="Polar residues" evidence="1">
    <location>
        <begin position="257"/>
        <end position="279"/>
    </location>
</feature>
<feature type="compositionally biased region" description="Polar residues" evidence="1">
    <location>
        <begin position="310"/>
        <end position="320"/>
    </location>
</feature>
<feature type="compositionally biased region" description="Basic and acidic residues" evidence="1">
    <location>
        <begin position="335"/>
        <end position="349"/>
    </location>
</feature>
<sequence>MDLFQSPGGDLIQDEDSVEVIEMLCIDFRDRLLVALSTTCQSDFREAKKVVEERLRDILETASSLSSTEVTSSPNASPLYNTDAPEDVVPTVGLDVGLDEPMADYSQNTPSITGGTASAEYQNSGDTNQMTLEDPACVDMFAAESQNTGHIPDSCLRDWSFEGVSMKSPSLFDWSSRNSNFPLTQEHENQFAEFLTLFEGEPNFDNWLSTMTWSSLESHSSPINGHSAGATPQLDQMHTVSNSRVARSVVSESTVTNTGSANSLNSGLLANTPSSSHSSVFERACSSVQEPTPEPTPVRGLQRKLRKQGPRQTTEATPCDQQIGPRASRATSQLPERRSMKMVRKEARDTPLTTSPANSTQINIEANTIPSDLSVEYAFGCFSDAKEVFETFYKRLSDDRKHLSSLLMRLFYAVGSPDALRQLRDALDLSRKNSMIASYHDSNDLAATVSVLDQLDATTTLSHILRRYHLVRLLDHRSKLESNHKAAKLAVKGTKRRLKYDCERIELMRRGENADCDANTRSAKERLKYRSKTRALTDLMQTLYPDLSPDSEGITTAGGCEYTRKLTKLRNRLACARNWYQFEETFPGAILALIPCATGDLSISIDHVEKLPSDVLKIFLDYLKERRGVFLSKMSRILSKDLYDVLMRRNVTKRYKLEQTNENSLTDGLHDDDRLLELCETV</sequence>
<keyword id="KW-1185">Reference proteome</keyword>
<organism>
    <name type="scientific">Glarea lozoyensis (strain ATCC 20868 / MF5171)</name>
    <dbReference type="NCBI Taxonomy" id="1116229"/>
    <lineage>
        <taxon>Eukaryota</taxon>
        <taxon>Fungi</taxon>
        <taxon>Dikarya</taxon>
        <taxon>Ascomycota</taxon>
        <taxon>Pezizomycotina</taxon>
        <taxon>Leotiomycetes</taxon>
        <taxon>Helotiales</taxon>
        <taxon>Helotiaceae</taxon>
        <taxon>Glarea</taxon>
    </lineage>
</organism>
<dbReference type="EMBL" id="KE145356">
    <property type="protein sequence ID" value="EPE34351.1"/>
    <property type="molecule type" value="Genomic_DNA"/>
</dbReference>
<dbReference type="RefSeq" id="XP_008078286.1">
    <property type="nucleotide sequence ID" value="XM_008080095.1"/>
</dbReference>
<dbReference type="STRING" id="1116229.S3DQQ3"/>
<dbReference type="GeneID" id="19469092"/>
<dbReference type="KEGG" id="glz:GLAREA_10045"/>
<dbReference type="eggNOG" id="ENOG502T008">
    <property type="taxonomic scope" value="Eukaryota"/>
</dbReference>
<dbReference type="HOGENOM" id="CLU_403347_0_0_1"/>
<dbReference type="OrthoDB" id="4462325at2759"/>
<dbReference type="Proteomes" id="UP000016922">
    <property type="component" value="Unassembled WGS sequence"/>
</dbReference>
<protein>
    <recommendedName>
        <fullName evidence="7">Pneumocandin biosynthesis cluster protein B</fullName>
    </recommendedName>
</protein>
<evidence type="ECO:0000256" key="1">
    <source>
        <dbReference type="SAM" id="MobiDB-lite"/>
    </source>
</evidence>
<evidence type="ECO:0000269" key="2">
    <source>
    </source>
</evidence>
<evidence type="ECO:0000269" key="3">
    <source>
    </source>
</evidence>
<evidence type="ECO:0000269" key="4">
    <source>
    </source>
</evidence>
<evidence type="ECO:0000269" key="5">
    <source>
    </source>
</evidence>
<evidence type="ECO:0000269" key="6">
    <source>
    </source>
</evidence>
<evidence type="ECO:0000303" key="7">
    <source>
    </source>
</evidence>
<evidence type="ECO:0000303" key="8">
    <source>
    </source>
</evidence>
<evidence type="ECO:0000303" key="9">
    <source>
    </source>
</evidence>
<reference key="1">
    <citation type="journal article" date="2013" name="BMC Genomics">
        <title>Genomics-driven discovery of the pneumocandin biosynthetic gene cluster in the fungus Glarea lozoyensis.</title>
        <authorList>
            <person name="Chen L."/>
            <person name="Yue Q."/>
            <person name="Zhang X."/>
            <person name="Xiang M."/>
            <person name="Wang C."/>
            <person name="Li S."/>
            <person name="Che Y."/>
            <person name="Ortiz-Lopez F.J."/>
            <person name="Bills G.F."/>
            <person name="Liu X."/>
            <person name="An Z."/>
        </authorList>
    </citation>
    <scope>NUCLEOTIDE SEQUENCE [LARGE SCALE GENOMIC DNA]</scope>
    <scope>IDENTIFICATION</scope>
    <scope>FUNCTION</scope>
    <source>
        <strain>ATCC 20868 / MF5171</strain>
    </source>
</reference>
<reference key="2">
    <citation type="journal article" date="2014" name="ChemBioChem">
        <title>Pneumocandin biosynthesis: involvement of a trans-selective proline hydroxylase.</title>
        <authorList>
            <person name="Houwaart S."/>
            <person name="Youssar L."/>
            <person name="Huettel W."/>
        </authorList>
    </citation>
    <scope>FUNCTION</scope>
</reference>
<reference key="3">
    <citation type="journal article" date="2015" name="ACS Chem. Biol.">
        <title>Genetic manipulation of the pneumocandin biosynthetic pathway for generation of analogues and evaluation of their antifungal activity.</title>
        <authorList>
            <person name="Li Y."/>
            <person name="Chen L."/>
            <person name="Yue Q."/>
            <person name="Liu X."/>
            <person name="An Z."/>
            <person name="Bills G.F."/>
        </authorList>
    </citation>
    <scope>FUNCTION</scope>
    <scope>BIOTECHNOLOGY</scope>
</reference>
<reference key="4">
    <citation type="journal article" date="2015" name="Appl. Environ. Microbiol.">
        <title>Engineering of Glarea lozoyensis for exclusive production of the pneumocandin B0 precursor of the antifungal drug caspofungin acetate.</title>
        <authorList>
            <person name="Chen L."/>
            <person name="Yue Q."/>
            <person name="Li Y."/>
            <person name="Niu X."/>
            <person name="Xiang M."/>
            <person name="Wang W."/>
            <person name="Bills G.F."/>
            <person name="Liu X."/>
            <person name="An Z."/>
        </authorList>
    </citation>
    <scope>FUNCTION</scope>
    <scope>BIOTECHNOLOGY</scope>
</reference>
<reference key="5">
    <citation type="journal article" date="2016" name="ACS Chem. Biol.">
        <title>Engineering of new pneumocandin side-chain analogues from Glarea lozoyensis by mutasynthesis and evaluation of their antifungal activity.</title>
        <authorList>
            <person name="Chen L."/>
            <person name="Li Y."/>
            <person name="Yue Q."/>
            <person name="Loksztejn A."/>
            <person name="Yokoyama K."/>
            <person name="Felix E.A."/>
            <person name="Liu X."/>
            <person name="Zhang N."/>
            <person name="An Z."/>
            <person name="Bills G.F."/>
        </authorList>
    </citation>
    <scope>FUNCTION</scope>
    <scope>BIOTECHNOLOGY</scope>
</reference>
<reference key="6">
    <citation type="journal article" date="2018" name="Appl. Environ. Microbiol.">
        <title>Cryptic production of trans-3-hydroxyproline in echinocandin B biosynthesis.</title>
        <authorList>
            <person name="Mattay J."/>
            <person name="Houwaart S."/>
            <person name="Huettel W."/>
        </authorList>
    </citation>
    <scope>FUNCTION</scope>
</reference>
<reference key="7">
    <citation type="journal article" date="2017" name="Z. Naturforsch. C">
        <title>Structural diversity in echinocandin biosynthesis: the impact of oxidation steps and approaches toward an evolutionary explanation.</title>
        <authorList>
            <person name="Huettel W."/>
        </authorList>
    </citation>
    <scope>REVIEW</scope>
</reference>